<dbReference type="EMBL" id="D50453">
    <property type="protein sequence ID" value="BAA09012.1"/>
    <property type="molecule type" value="Genomic_DNA"/>
</dbReference>
<dbReference type="EMBL" id="AL009126">
    <property type="protein sequence ID" value="CAB12188.1"/>
    <property type="molecule type" value="Genomic_DNA"/>
</dbReference>
<dbReference type="PIR" id="B69763">
    <property type="entry name" value="B69763"/>
</dbReference>
<dbReference type="RefSeq" id="WP_003234491.1">
    <property type="nucleotide sequence ID" value="NZ_OZ025638.1"/>
</dbReference>
<dbReference type="SMR" id="P94418"/>
<dbReference type="FunCoup" id="P94418">
    <property type="interactions" value="14"/>
</dbReference>
<dbReference type="STRING" id="224308.BSU03800"/>
<dbReference type="PaxDb" id="224308-BSU03800"/>
<dbReference type="EnsemblBacteria" id="CAB12188">
    <property type="protein sequence ID" value="CAB12188"/>
    <property type="gene ID" value="BSU_03800"/>
</dbReference>
<dbReference type="GeneID" id="938273"/>
<dbReference type="KEGG" id="bsu:BSU03800"/>
<dbReference type="PATRIC" id="fig|224308.179.peg.403"/>
<dbReference type="eggNOG" id="COG4606">
    <property type="taxonomic scope" value="Bacteria"/>
</dbReference>
<dbReference type="InParanoid" id="P94418"/>
<dbReference type="OrthoDB" id="9811975at2"/>
<dbReference type="PhylomeDB" id="P94418"/>
<dbReference type="BioCyc" id="BSUB:BSU03800-MONOMER"/>
<dbReference type="Proteomes" id="UP000001570">
    <property type="component" value="Chromosome"/>
</dbReference>
<dbReference type="GO" id="GO:0005886">
    <property type="term" value="C:plasma membrane"/>
    <property type="evidence" value="ECO:0000318"/>
    <property type="project" value="GO_Central"/>
</dbReference>
<dbReference type="GO" id="GO:0022857">
    <property type="term" value="F:transmembrane transporter activity"/>
    <property type="evidence" value="ECO:0000318"/>
    <property type="project" value="GO_Central"/>
</dbReference>
<dbReference type="GO" id="GO:0033214">
    <property type="term" value="P:siderophore-dependent iron import into cell"/>
    <property type="evidence" value="ECO:0000318"/>
    <property type="project" value="GO_Central"/>
</dbReference>
<dbReference type="CDD" id="cd06550">
    <property type="entry name" value="TM_ABC_iron-siderophores_like"/>
    <property type="match status" value="1"/>
</dbReference>
<dbReference type="FunFam" id="1.10.3470.10:FF:000004">
    <property type="entry name" value="Iron compound ABC transporter, permease"/>
    <property type="match status" value="1"/>
</dbReference>
<dbReference type="Gene3D" id="1.10.3470.10">
    <property type="entry name" value="ABC transporter involved in vitamin B12 uptake, BtuC"/>
    <property type="match status" value="1"/>
</dbReference>
<dbReference type="InterPro" id="IPR037294">
    <property type="entry name" value="ABC_BtuC-like"/>
</dbReference>
<dbReference type="InterPro" id="IPR000522">
    <property type="entry name" value="ABC_transptr_permease_BtuC"/>
</dbReference>
<dbReference type="PANTHER" id="PTHR30472">
    <property type="entry name" value="FERRIC ENTEROBACTIN TRANSPORT SYSTEM PERMEASE PROTEIN"/>
    <property type="match status" value="1"/>
</dbReference>
<dbReference type="PANTHER" id="PTHR30472:SF27">
    <property type="entry name" value="PETROBACTIN IMPORT SYSTEM PERMEASE PROTEIN YCLN"/>
    <property type="match status" value="1"/>
</dbReference>
<dbReference type="Pfam" id="PF01032">
    <property type="entry name" value="FecCD"/>
    <property type="match status" value="1"/>
</dbReference>
<dbReference type="SUPFAM" id="SSF81345">
    <property type="entry name" value="ABC transporter involved in vitamin B12 uptake, BtuC"/>
    <property type="match status" value="1"/>
</dbReference>
<gene>
    <name type="primary">yclN</name>
    <name type="ordered locus">BSU03800</name>
</gene>
<keyword id="KW-1003">Cell membrane</keyword>
<keyword id="KW-0406">Ion transport</keyword>
<keyword id="KW-0408">Iron</keyword>
<keyword id="KW-0410">Iron transport</keyword>
<keyword id="KW-0472">Membrane</keyword>
<keyword id="KW-1185">Reference proteome</keyword>
<keyword id="KW-0812">Transmembrane</keyword>
<keyword id="KW-1133">Transmembrane helix</keyword>
<keyword id="KW-0813">Transport</keyword>
<reference key="1">
    <citation type="journal article" date="1996" name="Microbiology">
        <title>The 25 degrees-36 degrees region of the Bacillus subtilis chromosome: determination of the sequence of a 146 kb segment and identification of 113 genes.</title>
        <authorList>
            <person name="Yamane K."/>
            <person name="Kumano M."/>
            <person name="Kurita K."/>
        </authorList>
    </citation>
    <scope>NUCLEOTIDE SEQUENCE [GENOMIC DNA]</scope>
    <source>
        <strain>168</strain>
    </source>
</reference>
<reference key="2">
    <citation type="journal article" date="1997" name="Nature">
        <title>The complete genome sequence of the Gram-positive bacterium Bacillus subtilis.</title>
        <authorList>
            <person name="Kunst F."/>
            <person name="Ogasawara N."/>
            <person name="Moszer I."/>
            <person name="Albertini A.M."/>
            <person name="Alloni G."/>
            <person name="Azevedo V."/>
            <person name="Bertero M.G."/>
            <person name="Bessieres P."/>
            <person name="Bolotin A."/>
            <person name="Borchert S."/>
            <person name="Borriss R."/>
            <person name="Boursier L."/>
            <person name="Brans A."/>
            <person name="Braun M."/>
            <person name="Brignell S.C."/>
            <person name="Bron S."/>
            <person name="Brouillet S."/>
            <person name="Bruschi C.V."/>
            <person name="Caldwell B."/>
            <person name="Capuano V."/>
            <person name="Carter N.M."/>
            <person name="Choi S.-K."/>
            <person name="Codani J.-J."/>
            <person name="Connerton I.F."/>
            <person name="Cummings N.J."/>
            <person name="Daniel R.A."/>
            <person name="Denizot F."/>
            <person name="Devine K.M."/>
            <person name="Duesterhoeft A."/>
            <person name="Ehrlich S.D."/>
            <person name="Emmerson P.T."/>
            <person name="Entian K.-D."/>
            <person name="Errington J."/>
            <person name="Fabret C."/>
            <person name="Ferrari E."/>
            <person name="Foulger D."/>
            <person name="Fritz C."/>
            <person name="Fujita M."/>
            <person name="Fujita Y."/>
            <person name="Fuma S."/>
            <person name="Galizzi A."/>
            <person name="Galleron N."/>
            <person name="Ghim S.-Y."/>
            <person name="Glaser P."/>
            <person name="Goffeau A."/>
            <person name="Golightly E.J."/>
            <person name="Grandi G."/>
            <person name="Guiseppi G."/>
            <person name="Guy B.J."/>
            <person name="Haga K."/>
            <person name="Haiech J."/>
            <person name="Harwood C.R."/>
            <person name="Henaut A."/>
            <person name="Hilbert H."/>
            <person name="Holsappel S."/>
            <person name="Hosono S."/>
            <person name="Hullo M.-F."/>
            <person name="Itaya M."/>
            <person name="Jones L.-M."/>
            <person name="Joris B."/>
            <person name="Karamata D."/>
            <person name="Kasahara Y."/>
            <person name="Klaerr-Blanchard M."/>
            <person name="Klein C."/>
            <person name="Kobayashi Y."/>
            <person name="Koetter P."/>
            <person name="Koningstein G."/>
            <person name="Krogh S."/>
            <person name="Kumano M."/>
            <person name="Kurita K."/>
            <person name="Lapidus A."/>
            <person name="Lardinois S."/>
            <person name="Lauber J."/>
            <person name="Lazarevic V."/>
            <person name="Lee S.-M."/>
            <person name="Levine A."/>
            <person name="Liu H."/>
            <person name="Masuda S."/>
            <person name="Mauel C."/>
            <person name="Medigue C."/>
            <person name="Medina N."/>
            <person name="Mellado R.P."/>
            <person name="Mizuno M."/>
            <person name="Moestl D."/>
            <person name="Nakai S."/>
            <person name="Noback M."/>
            <person name="Noone D."/>
            <person name="O'Reilly M."/>
            <person name="Ogawa K."/>
            <person name="Ogiwara A."/>
            <person name="Oudega B."/>
            <person name="Park S.-H."/>
            <person name="Parro V."/>
            <person name="Pohl T.M."/>
            <person name="Portetelle D."/>
            <person name="Porwollik S."/>
            <person name="Prescott A.M."/>
            <person name="Presecan E."/>
            <person name="Pujic P."/>
            <person name="Purnelle B."/>
            <person name="Rapoport G."/>
            <person name="Rey M."/>
            <person name="Reynolds S."/>
            <person name="Rieger M."/>
            <person name="Rivolta C."/>
            <person name="Rocha E."/>
            <person name="Roche B."/>
            <person name="Rose M."/>
            <person name="Sadaie Y."/>
            <person name="Sato T."/>
            <person name="Scanlan E."/>
            <person name="Schleich S."/>
            <person name="Schroeter R."/>
            <person name="Scoffone F."/>
            <person name="Sekiguchi J."/>
            <person name="Sekowska A."/>
            <person name="Seror S.J."/>
            <person name="Serror P."/>
            <person name="Shin B.-S."/>
            <person name="Soldo B."/>
            <person name="Sorokin A."/>
            <person name="Tacconi E."/>
            <person name="Takagi T."/>
            <person name="Takahashi H."/>
            <person name="Takemaru K."/>
            <person name="Takeuchi M."/>
            <person name="Tamakoshi A."/>
            <person name="Tanaka T."/>
            <person name="Terpstra P."/>
            <person name="Tognoni A."/>
            <person name="Tosato V."/>
            <person name="Uchiyama S."/>
            <person name="Vandenbol M."/>
            <person name="Vannier F."/>
            <person name="Vassarotti A."/>
            <person name="Viari A."/>
            <person name="Wambutt R."/>
            <person name="Wedler E."/>
            <person name="Wedler H."/>
            <person name="Weitzenegger T."/>
            <person name="Winters P."/>
            <person name="Wipat A."/>
            <person name="Yamamoto H."/>
            <person name="Yamane K."/>
            <person name="Yasumoto K."/>
            <person name="Yata K."/>
            <person name="Yoshida K."/>
            <person name="Yoshikawa H.-F."/>
            <person name="Zumstein E."/>
            <person name="Yoshikawa H."/>
            <person name="Danchin A."/>
        </authorList>
    </citation>
    <scope>NUCLEOTIDE SEQUENCE [LARGE SCALE GENOMIC DNA]</scope>
    <source>
        <strain>168</strain>
    </source>
</reference>
<reference key="3">
    <citation type="journal article" date="2009" name="Proc. Natl. Acad. Sci. U.S.A.">
        <title>Characterization of a Bacillus subtilis transporter for petrobactin, an anthrax stealth siderophore.</title>
        <authorList>
            <person name="Zawadzka A.M."/>
            <person name="Kim Y."/>
            <person name="Maltseva N."/>
            <person name="Nichiporuk R."/>
            <person name="Fan Y."/>
            <person name="Joachimiak A."/>
            <person name="Raymond K.N."/>
        </authorList>
    </citation>
    <scope>FUNCTION</scope>
    <scope>SUBUNIT</scope>
    <scope>DISRUPTION PHENOTYPE</scope>
    <source>
        <strain>168</strain>
    </source>
</reference>
<name>YCLN_BACSU</name>
<proteinExistence type="evidence at protein level"/>
<evidence type="ECO:0000255" key="1"/>
<evidence type="ECO:0000269" key="2">
    <source>
    </source>
</evidence>
<evidence type="ECO:0000305" key="3"/>
<evidence type="ECO:0000305" key="4">
    <source>
    </source>
</evidence>
<feature type="chain" id="PRO_0000359514" description="Petrobactin import system permease protein YclN">
    <location>
        <begin position="1"/>
        <end position="316"/>
    </location>
</feature>
<feature type="transmembrane region" description="Helical" evidence="1">
    <location>
        <begin position="5"/>
        <end position="25"/>
    </location>
</feature>
<feature type="transmembrane region" description="Helical" evidence="1">
    <location>
        <begin position="49"/>
        <end position="69"/>
    </location>
</feature>
<feature type="transmembrane region" description="Helical" evidence="1">
    <location>
        <begin position="94"/>
        <end position="114"/>
    </location>
</feature>
<feature type="transmembrane region" description="Helical" evidence="1">
    <location>
        <begin position="133"/>
        <end position="153"/>
    </location>
</feature>
<feature type="transmembrane region" description="Helical" evidence="1">
    <location>
        <begin position="181"/>
        <end position="201"/>
    </location>
</feature>
<feature type="transmembrane region" description="Helical" evidence="1">
    <location>
        <begin position="224"/>
        <end position="244"/>
    </location>
</feature>
<feature type="transmembrane region" description="Helical" evidence="1">
    <location>
        <begin position="268"/>
        <end position="288"/>
    </location>
</feature>
<feature type="transmembrane region" description="Helical" evidence="1">
    <location>
        <begin position="290"/>
        <end position="310"/>
    </location>
</feature>
<comment type="function">
    <text evidence="2">Part of the ABC transporter complex YclNOPQ involved in uptake of ferric-petrobactin. Petrobactin is a photoreactive 3,4-catecholate siderophore produced by many members of the B.cereus group, including B.anthracis. Probably responsible for the translocation of the substrate across the membrane.</text>
</comment>
<comment type="subunit">
    <text evidence="4">The complex is composed of two ATP-binding proteins (YclP), two transmembrane proteins (YclN and YclO) and a solute-binding protein (YclQ).</text>
</comment>
<comment type="subcellular location">
    <subcellularLocation>
        <location evidence="3">Cell membrane</location>
        <topology evidence="1">Multi-pass membrane protein</topology>
    </subcellularLocation>
</comment>
<comment type="disruption phenotype">
    <text evidence="2">Disruption mutants are unable to use petrobactin for iron delivery and growth.</text>
</comment>
<comment type="similarity">
    <text evidence="3">Belongs to the binding-protein-dependent transport system permease family. FecCD subfamily.</text>
</comment>
<organism>
    <name type="scientific">Bacillus subtilis (strain 168)</name>
    <dbReference type="NCBI Taxonomy" id="224308"/>
    <lineage>
        <taxon>Bacteria</taxon>
        <taxon>Bacillati</taxon>
        <taxon>Bacillota</taxon>
        <taxon>Bacilli</taxon>
        <taxon>Bacillales</taxon>
        <taxon>Bacillaceae</taxon>
        <taxon>Bacillus</taxon>
    </lineage>
</organism>
<sequence>MKLRYLFILLIILAVTSVFIGVEDLSPLDLFDLSKQEASTLFASRLPRLISIVIAGLSMSICGLIMQQISRNKFVSPTTAGTMDWARLGILISLLLFTSASPLIKMLVAFVFALAGNFLFMKILERIKFNDTIFIPLVGLMLGNIVSSIATFIAYKYDLIQNVSSWLQGDFSLVVKGRYELLYLSIPLVIIAYVYADKFTLAGMGESFSVNLGLKYKRVVNIGLIIVSLITSLVILTVGMLPFLGLIIPNIVSIYRGDNLKSSLPHTVLLGAVFVLFCDILGRIIIFPYEISIGLMVGIIGSGIFLFMLLRRKAYA</sequence>
<accession>P94418</accession>
<accession>Q797P2</accession>
<protein>
    <recommendedName>
        <fullName evidence="3">Petrobactin import system permease protein YclN</fullName>
    </recommendedName>
</protein>